<sequence length="227" mass="26433">MTDFKLGIVRLGRVAGKTKYTLIDEQDIPLVESYSFEARMEVDADGNGAKIFAYAFDKNRGRGSGRLLHELLWERHRGGVAPGFQVVHLNAVTVDNRLDNLQLVPWGWRPKAEETSSKQREQSLYWLAIQQLPTDPIEEQFPVLNVTRYYNANGDVVEEEENSCTYYECHYPPCTVIEKQLREFNICGRCQVARYCGSQCQQKDWPAHKKHCRERKRPFQHELEPER</sequence>
<accession>Q96E35</accession>
<accession>Q5T366</accession>
<organism>
    <name type="scientific">Homo sapiens</name>
    <name type="common">Human</name>
    <dbReference type="NCBI Taxonomy" id="9606"/>
    <lineage>
        <taxon>Eukaryota</taxon>
        <taxon>Metazoa</taxon>
        <taxon>Chordata</taxon>
        <taxon>Craniata</taxon>
        <taxon>Vertebrata</taxon>
        <taxon>Euteleostomi</taxon>
        <taxon>Mammalia</taxon>
        <taxon>Eutheria</taxon>
        <taxon>Euarchontoglires</taxon>
        <taxon>Primates</taxon>
        <taxon>Haplorrhini</taxon>
        <taxon>Catarrhini</taxon>
        <taxon>Hominidae</taxon>
        <taxon>Homo</taxon>
    </lineage>
</organism>
<gene>
    <name type="primary">ZMYND19</name>
    <name type="synonym">MIZIP</name>
</gene>
<proteinExistence type="evidence at protein level"/>
<reference key="1">
    <citation type="journal article" date="2002" name="FEBS Lett.">
        <title>MIZIP, a highly conserved, vertebrate specific melanin-concentrating hormone receptor 1 interacting zinc-finger protein.</title>
        <authorList>
            <person name="Baechner D."/>
            <person name="Kreienkamp H.-J."/>
            <person name="Richter D."/>
        </authorList>
    </citation>
    <scope>NUCLEOTIDE SEQUENCE [MRNA]</scope>
    <scope>TISSUE SPECIFICITY</scope>
    <scope>SUBCELLULAR LOCATION</scope>
    <scope>INTERACTION WITH GPR24</scope>
    <source>
        <tissue>Brain</tissue>
    </source>
</reference>
<reference key="2">
    <citation type="journal article" date="2004" name="Nature">
        <title>DNA sequence and analysis of human chromosome 9.</title>
        <authorList>
            <person name="Humphray S.J."/>
            <person name="Oliver K."/>
            <person name="Hunt A.R."/>
            <person name="Plumb R.W."/>
            <person name="Loveland J.E."/>
            <person name="Howe K.L."/>
            <person name="Andrews T.D."/>
            <person name="Searle S."/>
            <person name="Hunt S.E."/>
            <person name="Scott C.E."/>
            <person name="Jones M.C."/>
            <person name="Ainscough R."/>
            <person name="Almeida J.P."/>
            <person name="Ambrose K.D."/>
            <person name="Ashwell R.I.S."/>
            <person name="Babbage A.K."/>
            <person name="Babbage S."/>
            <person name="Bagguley C.L."/>
            <person name="Bailey J."/>
            <person name="Banerjee R."/>
            <person name="Barker D.J."/>
            <person name="Barlow K.F."/>
            <person name="Bates K."/>
            <person name="Beasley H."/>
            <person name="Beasley O."/>
            <person name="Bird C.P."/>
            <person name="Bray-Allen S."/>
            <person name="Brown A.J."/>
            <person name="Brown J.Y."/>
            <person name="Burford D."/>
            <person name="Burrill W."/>
            <person name="Burton J."/>
            <person name="Carder C."/>
            <person name="Carter N.P."/>
            <person name="Chapman J.C."/>
            <person name="Chen Y."/>
            <person name="Clarke G."/>
            <person name="Clark S.Y."/>
            <person name="Clee C.M."/>
            <person name="Clegg S."/>
            <person name="Collier R.E."/>
            <person name="Corby N."/>
            <person name="Crosier M."/>
            <person name="Cummings A.T."/>
            <person name="Davies J."/>
            <person name="Dhami P."/>
            <person name="Dunn M."/>
            <person name="Dutta I."/>
            <person name="Dyer L.W."/>
            <person name="Earthrowl M.E."/>
            <person name="Faulkner L."/>
            <person name="Fleming C.J."/>
            <person name="Frankish A."/>
            <person name="Frankland J.A."/>
            <person name="French L."/>
            <person name="Fricker D.G."/>
            <person name="Garner P."/>
            <person name="Garnett J."/>
            <person name="Ghori J."/>
            <person name="Gilbert J.G.R."/>
            <person name="Glison C."/>
            <person name="Grafham D.V."/>
            <person name="Gribble S."/>
            <person name="Griffiths C."/>
            <person name="Griffiths-Jones S."/>
            <person name="Grocock R."/>
            <person name="Guy J."/>
            <person name="Hall R.E."/>
            <person name="Hammond S."/>
            <person name="Harley J.L."/>
            <person name="Harrison E.S.I."/>
            <person name="Hart E.A."/>
            <person name="Heath P.D."/>
            <person name="Henderson C.D."/>
            <person name="Hopkins B.L."/>
            <person name="Howard P.J."/>
            <person name="Howden P.J."/>
            <person name="Huckle E."/>
            <person name="Johnson C."/>
            <person name="Johnson D."/>
            <person name="Joy A.A."/>
            <person name="Kay M."/>
            <person name="Keenan S."/>
            <person name="Kershaw J.K."/>
            <person name="Kimberley A.M."/>
            <person name="King A."/>
            <person name="Knights A."/>
            <person name="Laird G.K."/>
            <person name="Langford C."/>
            <person name="Lawlor S."/>
            <person name="Leongamornlert D.A."/>
            <person name="Leversha M."/>
            <person name="Lloyd C."/>
            <person name="Lloyd D.M."/>
            <person name="Lovell J."/>
            <person name="Martin S."/>
            <person name="Mashreghi-Mohammadi M."/>
            <person name="Matthews L."/>
            <person name="McLaren S."/>
            <person name="McLay K.E."/>
            <person name="McMurray A."/>
            <person name="Milne S."/>
            <person name="Nickerson T."/>
            <person name="Nisbett J."/>
            <person name="Nordsiek G."/>
            <person name="Pearce A.V."/>
            <person name="Peck A.I."/>
            <person name="Porter K.M."/>
            <person name="Pandian R."/>
            <person name="Pelan S."/>
            <person name="Phillimore B."/>
            <person name="Povey S."/>
            <person name="Ramsey Y."/>
            <person name="Rand V."/>
            <person name="Scharfe M."/>
            <person name="Sehra H.K."/>
            <person name="Shownkeen R."/>
            <person name="Sims S.K."/>
            <person name="Skuce C.D."/>
            <person name="Smith M."/>
            <person name="Steward C.A."/>
            <person name="Swarbreck D."/>
            <person name="Sycamore N."/>
            <person name="Tester J."/>
            <person name="Thorpe A."/>
            <person name="Tracey A."/>
            <person name="Tromans A."/>
            <person name="Thomas D.W."/>
            <person name="Wall M."/>
            <person name="Wallis J.M."/>
            <person name="West A.P."/>
            <person name="Whitehead S.L."/>
            <person name="Willey D.L."/>
            <person name="Williams S.A."/>
            <person name="Wilming L."/>
            <person name="Wray P.W."/>
            <person name="Young L."/>
            <person name="Ashurst J.L."/>
            <person name="Coulson A."/>
            <person name="Blocker H."/>
            <person name="Durbin R.M."/>
            <person name="Sulston J.E."/>
            <person name="Hubbard T."/>
            <person name="Jackson M.J."/>
            <person name="Bentley D.R."/>
            <person name="Beck S."/>
            <person name="Rogers J."/>
            <person name="Dunham I."/>
        </authorList>
    </citation>
    <scope>NUCLEOTIDE SEQUENCE [LARGE SCALE GENOMIC DNA]</scope>
</reference>
<reference key="3">
    <citation type="journal article" date="2004" name="Genome Res.">
        <title>The status, quality, and expansion of the NIH full-length cDNA project: the Mammalian Gene Collection (MGC).</title>
        <authorList>
            <consortium name="The MGC Project Team"/>
        </authorList>
    </citation>
    <scope>NUCLEOTIDE SEQUENCE [LARGE SCALE MRNA]</scope>
    <source>
        <tissue>Prostate</tissue>
    </source>
</reference>
<evidence type="ECO:0000255" key="1">
    <source>
        <dbReference type="PROSITE-ProRule" id="PRU00134"/>
    </source>
</evidence>
<evidence type="ECO:0000269" key="2">
    <source>
    </source>
</evidence>
<feature type="chain" id="PRO_0000218319" description="Zinc finger MYND domain-containing protein 19">
    <location>
        <begin position="1"/>
        <end position="227"/>
    </location>
</feature>
<feature type="zinc finger region" description="MYND-type; degenerate" evidence="1">
    <location>
        <begin position="174"/>
        <end position="212"/>
    </location>
</feature>
<feature type="binding site" evidence="1">
    <location>
        <position position="187"/>
    </location>
    <ligand>
        <name>Zn(2+)</name>
        <dbReference type="ChEBI" id="CHEBI:29105"/>
    </ligand>
</feature>
<feature type="binding site" evidence="1">
    <location>
        <position position="190"/>
    </location>
    <ligand>
        <name>Zn(2+)</name>
        <dbReference type="ChEBI" id="CHEBI:29105"/>
    </ligand>
</feature>
<feature type="binding site" evidence="1">
    <location>
        <position position="208"/>
    </location>
    <ligand>
        <name>Zn(2+)</name>
        <dbReference type="ChEBI" id="CHEBI:29105"/>
    </ligand>
</feature>
<feature type="binding site" evidence="1">
    <location>
        <position position="212"/>
    </location>
    <ligand>
        <name>Zn(2+)</name>
        <dbReference type="ChEBI" id="CHEBI:29105"/>
    </ligand>
</feature>
<protein>
    <recommendedName>
        <fullName>Zinc finger MYND domain-containing protein 19</fullName>
    </recommendedName>
    <alternativeName>
        <fullName>Melanin-concentrating hormone receptor 1-interacting zinc finger protein</fullName>
        <shortName>MCH-R1-interacting zinc finger protein</shortName>
    </alternativeName>
</protein>
<name>ZMY19_HUMAN</name>
<dbReference type="EMBL" id="AJ298882">
    <property type="protein sequence ID" value="CAC16691.1"/>
    <property type="molecule type" value="mRNA"/>
</dbReference>
<dbReference type="EMBL" id="AL365502">
    <property type="status" value="NOT_ANNOTATED_CDS"/>
    <property type="molecule type" value="Genomic_DNA"/>
</dbReference>
<dbReference type="EMBL" id="BC012948">
    <property type="protein sequence ID" value="AAH12948.1"/>
    <property type="molecule type" value="mRNA"/>
</dbReference>
<dbReference type="CCDS" id="CCDS7048.1"/>
<dbReference type="RefSeq" id="NP_612471.1">
    <property type="nucleotide sequence ID" value="NM_138462.3"/>
</dbReference>
<dbReference type="SMR" id="Q96E35"/>
<dbReference type="BioGRID" id="125490">
    <property type="interactions" value="118"/>
</dbReference>
<dbReference type="FunCoup" id="Q96E35">
    <property type="interactions" value="663"/>
</dbReference>
<dbReference type="IntAct" id="Q96E35">
    <property type="interactions" value="107"/>
</dbReference>
<dbReference type="MINT" id="Q96E35"/>
<dbReference type="STRING" id="9606.ENSP00000298585"/>
<dbReference type="iPTMnet" id="Q96E35"/>
<dbReference type="PhosphoSitePlus" id="Q96E35"/>
<dbReference type="BioMuta" id="ZMYND19"/>
<dbReference type="DMDM" id="46397255"/>
<dbReference type="jPOST" id="Q96E35"/>
<dbReference type="MassIVE" id="Q96E35"/>
<dbReference type="PaxDb" id="9606-ENSP00000298585"/>
<dbReference type="PeptideAtlas" id="Q96E35"/>
<dbReference type="ProteomicsDB" id="76369"/>
<dbReference type="Pumba" id="Q96E35"/>
<dbReference type="Antibodypedia" id="19078">
    <property type="antibodies" value="67 antibodies from 19 providers"/>
</dbReference>
<dbReference type="DNASU" id="116225"/>
<dbReference type="Ensembl" id="ENST00000298585.3">
    <property type="protein sequence ID" value="ENSP00000298585.2"/>
    <property type="gene ID" value="ENSG00000165724.6"/>
</dbReference>
<dbReference type="GeneID" id="116225"/>
<dbReference type="KEGG" id="hsa:116225"/>
<dbReference type="MANE-Select" id="ENST00000298585.3">
    <property type="protein sequence ID" value="ENSP00000298585.2"/>
    <property type="RefSeq nucleotide sequence ID" value="NM_138462.3"/>
    <property type="RefSeq protein sequence ID" value="NP_612471.1"/>
</dbReference>
<dbReference type="UCSC" id="uc004cno.2">
    <property type="organism name" value="human"/>
</dbReference>
<dbReference type="AGR" id="HGNC:21146"/>
<dbReference type="CTD" id="116225"/>
<dbReference type="DisGeNET" id="116225"/>
<dbReference type="GeneCards" id="ZMYND19"/>
<dbReference type="HGNC" id="HGNC:21146">
    <property type="gene designation" value="ZMYND19"/>
</dbReference>
<dbReference type="HPA" id="ENSG00000165724">
    <property type="expression patterns" value="Tissue enriched (retina)"/>
</dbReference>
<dbReference type="MIM" id="611424">
    <property type="type" value="gene"/>
</dbReference>
<dbReference type="neXtProt" id="NX_Q96E35"/>
<dbReference type="OpenTargets" id="ENSG00000165724"/>
<dbReference type="PharmGKB" id="PA134878875"/>
<dbReference type="VEuPathDB" id="HostDB:ENSG00000165724"/>
<dbReference type="eggNOG" id="ENOG502QUSS">
    <property type="taxonomic scope" value="Eukaryota"/>
</dbReference>
<dbReference type="GeneTree" id="ENSGT00940000153820"/>
<dbReference type="HOGENOM" id="CLU_084232_0_0_1"/>
<dbReference type="InParanoid" id="Q96E35"/>
<dbReference type="OMA" id="FYECHYP"/>
<dbReference type="OrthoDB" id="2951111at2759"/>
<dbReference type="PAN-GO" id="Q96E35">
    <property type="GO annotations" value="3 GO annotations based on evolutionary models"/>
</dbReference>
<dbReference type="PhylomeDB" id="Q96E35"/>
<dbReference type="TreeFam" id="TF329209"/>
<dbReference type="PathwayCommons" id="Q96E35"/>
<dbReference type="SignaLink" id="Q96E35"/>
<dbReference type="BioGRID-ORCS" id="116225">
    <property type="hits" value="26 hits in 1159 CRISPR screens"/>
</dbReference>
<dbReference type="ChiTaRS" id="ZMYND19">
    <property type="organism name" value="human"/>
</dbReference>
<dbReference type="GenomeRNAi" id="116225"/>
<dbReference type="Pharos" id="Q96E35">
    <property type="development level" value="Tdark"/>
</dbReference>
<dbReference type="PRO" id="PR:Q96E35"/>
<dbReference type="Proteomes" id="UP000005640">
    <property type="component" value="Chromosome 9"/>
</dbReference>
<dbReference type="RNAct" id="Q96E35">
    <property type="molecule type" value="protein"/>
</dbReference>
<dbReference type="Bgee" id="ENSG00000165724">
    <property type="expression patterns" value="Expressed in left testis and 164 other cell types or tissues"/>
</dbReference>
<dbReference type="GO" id="GO:0005737">
    <property type="term" value="C:cytoplasm"/>
    <property type="evidence" value="ECO:0000318"/>
    <property type="project" value="GO_Central"/>
</dbReference>
<dbReference type="GO" id="GO:0016020">
    <property type="term" value="C:membrane"/>
    <property type="evidence" value="ECO:0000318"/>
    <property type="project" value="GO_Central"/>
</dbReference>
<dbReference type="GO" id="GO:0005886">
    <property type="term" value="C:plasma membrane"/>
    <property type="evidence" value="ECO:0007669"/>
    <property type="project" value="UniProtKB-SubCell"/>
</dbReference>
<dbReference type="GO" id="GO:0045202">
    <property type="term" value="C:synapse"/>
    <property type="evidence" value="ECO:0000318"/>
    <property type="project" value="GO_Central"/>
</dbReference>
<dbReference type="GO" id="GO:0008270">
    <property type="term" value="F:zinc ion binding"/>
    <property type="evidence" value="ECO:0007669"/>
    <property type="project" value="UniProtKB-KW"/>
</dbReference>
<dbReference type="FunFam" id="6.10.140.2220:FF:000007">
    <property type="entry name" value="Zinc finger MYND domain-containing protein 19"/>
    <property type="match status" value="1"/>
</dbReference>
<dbReference type="Gene3D" id="6.10.140.2220">
    <property type="match status" value="1"/>
</dbReference>
<dbReference type="InterPro" id="IPR044925">
    <property type="entry name" value="His-Me_finger_sf"/>
</dbReference>
<dbReference type="InterPro" id="IPR003615">
    <property type="entry name" value="HNH_nuc"/>
</dbReference>
<dbReference type="InterPro" id="IPR032978">
    <property type="entry name" value="ZMYND19"/>
</dbReference>
<dbReference type="InterPro" id="IPR002893">
    <property type="entry name" value="Znf_MYND"/>
</dbReference>
<dbReference type="PANTHER" id="PTHR46831">
    <property type="entry name" value="ZINC FINGER MYND DOMAIN-CONTAINING PROTEIN 19"/>
    <property type="match status" value="1"/>
</dbReference>
<dbReference type="PANTHER" id="PTHR46831:SF1">
    <property type="entry name" value="ZINC FINGER MYND DOMAIN-CONTAINING PROTEIN 19"/>
    <property type="match status" value="1"/>
</dbReference>
<dbReference type="Pfam" id="PF13392">
    <property type="entry name" value="HNH_3"/>
    <property type="match status" value="1"/>
</dbReference>
<dbReference type="Pfam" id="PF01753">
    <property type="entry name" value="zf-MYND"/>
    <property type="match status" value="1"/>
</dbReference>
<dbReference type="SUPFAM" id="SSF54060">
    <property type="entry name" value="His-Me finger endonucleases"/>
    <property type="match status" value="1"/>
</dbReference>
<dbReference type="SUPFAM" id="SSF144232">
    <property type="entry name" value="HIT/MYND zinc finger-like"/>
    <property type="match status" value="1"/>
</dbReference>
<dbReference type="PROSITE" id="PS01360">
    <property type="entry name" value="ZF_MYND_1"/>
    <property type="match status" value="1"/>
</dbReference>
<dbReference type="PROSITE" id="PS50865">
    <property type="entry name" value="ZF_MYND_2"/>
    <property type="match status" value="1"/>
</dbReference>
<comment type="function">
    <text>May be involved as a regulatory molecule in GPR24/MCH-R1 signaling.</text>
</comment>
<comment type="subunit">
    <text evidence="2">Interacts with GPR24/MCH-R1.</text>
</comment>
<comment type="interaction">
    <interactant intactId="EBI-746595">
        <id>Q96E35</id>
    </interactant>
    <interactant intactId="EBI-9357295">
        <id>Q9BTE6-2</id>
        <label>AARSD1</label>
    </interactant>
    <organismsDiffer>false</organismsDiffer>
    <experiments>3</experiments>
</comment>
<comment type="interaction">
    <interactant intactId="EBI-746595">
        <id>Q96E35</id>
    </interactant>
    <interactant intactId="EBI-11976299">
        <id>Q5BKX5-3</id>
        <label>ACTMAP</label>
    </interactant>
    <organismsDiffer>false</organismsDiffer>
    <experiments>3</experiments>
</comment>
<comment type="interaction">
    <interactant intactId="EBI-746595">
        <id>Q96E35</id>
    </interactant>
    <interactant intactId="EBI-14493093">
        <id>Q3KP44</id>
        <label>ANKRD55</label>
    </interactant>
    <organismsDiffer>false</organismsDiffer>
    <experiments>3</experiments>
</comment>
<comment type="interaction">
    <interactant intactId="EBI-746595">
        <id>Q96E35</id>
    </interactant>
    <interactant intactId="EBI-1104653">
        <id>Q14094</id>
        <label>CCNI</label>
    </interactant>
    <organismsDiffer>false</organismsDiffer>
    <experiments>3</experiments>
</comment>
<comment type="interaction">
    <interactant intactId="EBI-746595">
        <id>Q96E35</id>
    </interactant>
    <interactant intactId="EBI-4314501">
        <id>P40199</id>
        <label>CEACAM6</label>
    </interactant>
    <organismsDiffer>false</organismsDiffer>
    <experiments>3</experiments>
</comment>
<comment type="interaction">
    <interactant intactId="EBI-746595">
        <id>Q96E35</id>
    </interactant>
    <interactant intactId="EBI-11088043">
        <id>Q16630-2</id>
        <label>CPSF6</label>
    </interactant>
    <organismsDiffer>false</organismsDiffer>
    <experiments>3</experiments>
</comment>
<comment type="interaction">
    <interactant intactId="EBI-746595">
        <id>Q96E35</id>
    </interactant>
    <interactant intactId="EBI-2340258">
        <id>Q8N9I9</id>
        <label>DTX3</label>
    </interactant>
    <organismsDiffer>false</organismsDiffer>
    <experiments>3</experiments>
</comment>
<comment type="interaction">
    <interactant intactId="EBI-746595">
        <id>Q96E35</id>
    </interactant>
    <interactant intactId="EBI-713221">
        <id>Q8TC92</id>
        <label>ENOX1</label>
    </interactant>
    <organismsDiffer>false</organismsDiffer>
    <experiments>6</experiments>
</comment>
<comment type="interaction">
    <interactant intactId="EBI-746595">
        <id>Q96E35</id>
    </interactant>
    <interactant intactId="EBI-1021914">
        <id>Q6UN15</id>
        <label>FIP1L1</label>
    </interactant>
    <organismsDiffer>false</organismsDiffer>
    <experiments>3</experiments>
</comment>
<comment type="interaction">
    <interactant intactId="EBI-746595">
        <id>Q96E35</id>
    </interactant>
    <interactant intactId="EBI-10242151">
        <id>Q53EP0-3</id>
        <label>FNDC3B</label>
    </interactant>
    <organismsDiffer>false</organismsDiffer>
    <experiments>3</experiments>
</comment>
<comment type="interaction">
    <interactant intactId="EBI-746595">
        <id>Q96E35</id>
    </interactant>
    <interactant intactId="EBI-1057431">
        <id>O14556</id>
        <label>GAPDHS</label>
    </interactant>
    <organismsDiffer>false</organismsDiffer>
    <experiments>3</experiments>
</comment>
<comment type="interaction">
    <interactant intactId="EBI-746595">
        <id>Q96E35</id>
    </interactant>
    <interactant intactId="EBI-10259069">
        <id>Q86UU5</id>
        <label>GGN</label>
    </interactant>
    <organismsDiffer>false</organismsDiffer>
    <experiments>3</experiments>
</comment>
<comment type="interaction">
    <interactant intactId="EBI-746595">
        <id>Q96E35</id>
    </interactant>
    <interactant intactId="EBI-948296">
        <id>Q9UKD1</id>
        <label>GMEB2</label>
    </interactant>
    <organismsDiffer>false</organismsDiffer>
    <experiments>3</experiments>
</comment>
<comment type="interaction">
    <interactant intactId="EBI-746595">
        <id>Q96E35</id>
    </interactant>
    <interactant intactId="EBI-739467">
        <id>Q9H8Y8</id>
        <label>GORASP2</label>
    </interactant>
    <organismsDiffer>false</organismsDiffer>
    <experiments>3</experiments>
</comment>
<comment type="interaction">
    <interactant intactId="EBI-746595">
        <id>Q96E35</id>
    </interactant>
    <interactant intactId="EBI-12353035">
        <id>Q13322-4</id>
        <label>GRB10</label>
    </interactant>
    <organismsDiffer>false</organismsDiffer>
    <experiments>3</experiments>
</comment>
<comment type="interaction">
    <interactant intactId="EBI-746595">
        <id>Q96E35</id>
    </interactant>
    <interactant intactId="EBI-372619">
        <id>Q14687</id>
        <label>GSE1</label>
    </interactant>
    <organismsDiffer>false</organismsDiffer>
    <experiments>3</experiments>
</comment>
<comment type="interaction">
    <interactant intactId="EBI-746595">
        <id>Q96E35</id>
    </interactant>
    <interactant intactId="EBI-1030560">
        <id>P13984</id>
        <label>GTF2F2</label>
    </interactant>
    <organismsDiffer>false</organismsDiffer>
    <experiments>3</experiments>
</comment>
<comment type="interaction">
    <interactant intactId="EBI-746595">
        <id>Q96E35</id>
    </interactant>
    <interactant intactId="EBI-746580">
        <id>Q9UJ83</id>
        <label>HACL1</label>
    </interactant>
    <organismsDiffer>false</organismsDiffer>
    <experiments>7</experiments>
</comment>
<comment type="interaction">
    <interactant intactId="EBI-746595">
        <id>Q96E35</id>
    </interactant>
    <interactant intactId="EBI-6509505">
        <id>Q0VD86</id>
        <label>INCA1</label>
    </interactant>
    <organismsDiffer>false</organismsDiffer>
    <experiments>3</experiments>
</comment>
<comment type="interaction">
    <interactant intactId="EBI-746595">
        <id>Q96E35</id>
    </interactant>
    <interactant intactId="EBI-742916">
        <id>Q8WZ19</id>
        <label>KCTD13</label>
    </interactant>
    <organismsDiffer>false</organismsDiffer>
    <experiments>7</experiments>
</comment>
<comment type="interaction">
    <interactant intactId="EBI-746595">
        <id>Q96E35</id>
    </interactant>
    <interactant intactId="EBI-11976683">
        <id>Q4G0X4</id>
        <label>KCTD21</label>
    </interactant>
    <organismsDiffer>false</organismsDiffer>
    <experiments>3</experiments>
</comment>
<comment type="interaction">
    <interactant intactId="EBI-746595">
        <id>Q96E35</id>
    </interactant>
    <interactant intactId="EBI-1216080">
        <id>Q9Y250</id>
        <label>LZTS1</label>
    </interactant>
    <organismsDiffer>false</organismsDiffer>
    <experiments>3</experiments>
</comment>
<comment type="interaction">
    <interactant intactId="EBI-746595">
        <id>Q96E35</id>
    </interactant>
    <interactant intactId="EBI-741037">
        <id>Q9BRK4</id>
        <label>LZTS2</label>
    </interactant>
    <organismsDiffer>false</organismsDiffer>
    <experiments>4</experiments>
</comment>
<comment type="interaction">
    <interactant intactId="EBI-746595">
        <id>Q96E35</id>
    </interactant>
    <interactant intactId="EBI-740216">
        <id>P55198</id>
        <label>MLLT6</label>
    </interactant>
    <organismsDiffer>false</organismsDiffer>
    <experiments>3</experiments>
</comment>
<comment type="interaction">
    <interactant intactId="EBI-746595">
        <id>Q96E35</id>
    </interactant>
    <interactant intactId="EBI-8641936">
        <id>Q15742</id>
        <label>NAB2</label>
    </interactant>
    <organismsDiffer>false</organismsDiffer>
    <experiments>7</experiments>
</comment>
<comment type="interaction">
    <interactant intactId="EBI-746595">
        <id>Q96E35</id>
    </interactant>
    <interactant intactId="EBI-10171633">
        <id>Q96PV4</id>
        <label>PNMA5</label>
    </interactant>
    <organismsDiffer>false</organismsDiffer>
    <experiments>6</experiments>
</comment>
<comment type="interaction">
    <interactant intactId="EBI-746595">
        <id>Q96E35</id>
    </interactant>
    <interactant intactId="EBI-1053424">
        <id>O43741</id>
        <label>PRKAB2</label>
    </interactant>
    <organismsDiffer>false</organismsDiffer>
    <experiments>5</experiments>
</comment>
<comment type="interaction">
    <interactant intactId="EBI-746595">
        <id>Q96E35</id>
    </interactant>
    <interactant intactId="EBI-2805516">
        <id>P31321</id>
        <label>PRKAR1B</label>
    </interactant>
    <organismsDiffer>false</organismsDiffer>
    <experiments>3</experiments>
</comment>
<comment type="interaction">
    <interactant intactId="EBI-746595">
        <id>Q96E35</id>
    </interactant>
    <interactant intactId="EBI-351098">
        <id>O14744</id>
        <label>PRMT5</label>
    </interactant>
    <organismsDiffer>false</organismsDiffer>
    <experiments>3</experiments>
</comment>
<comment type="interaction">
    <interactant intactId="EBI-746595">
        <id>Q96E35</id>
    </interactant>
    <interactant intactId="EBI-359352">
        <id>P25786</id>
        <label>PSMA1</label>
    </interactant>
    <organismsDiffer>false</organismsDiffer>
    <experiments>3</experiments>
</comment>
<comment type="interaction">
    <interactant intactId="EBI-746595">
        <id>Q96E35</id>
    </interactant>
    <interactant intactId="EBI-746118">
        <id>Q8HWS3</id>
        <label>RFX6</label>
    </interactant>
    <organismsDiffer>false</organismsDiffer>
    <experiments>3</experiments>
</comment>
<comment type="interaction">
    <interactant intactId="EBI-746595">
        <id>Q96E35</id>
    </interactant>
    <interactant intactId="EBI-3957636">
        <id>Q8IYX7</id>
        <label>SAXO1</label>
    </interactant>
    <organismsDiffer>false</organismsDiffer>
    <experiments>6</experiments>
</comment>
<comment type="interaction">
    <interactant intactId="EBI-746595">
        <id>Q96E35</id>
    </interactant>
    <interactant intactId="EBI-14276801">
        <id>Q14524-3</id>
        <label>SCN5A</label>
    </interactant>
    <organismsDiffer>false</organismsDiffer>
    <experiments>4</experiments>
</comment>
<comment type="interaction">
    <interactant intactId="EBI-746595">
        <id>Q96E35</id>
    </interactant>
    <interactant intactId="EBI-10216195">
        <id>P59797</id>
        <label>SELENOV</label>
    </interactant>
    <organismsDiffer>false</organismsDiffer>
    <experiments>6</experiments>
</comment>
<comment type="interaction">
    <interactant intactId="EBI-746595">
        <id>Q96E35</id>
    </interactant>
    <interactant intactId="EBI-12035119">
        <id>O75177-5</id>
        <label>SS18L1</label>
    </interactant>
    <organismsDiffer>false</organismsDiffer>
    <experiments>3</experiments>
</comment>
<comment type="interaction">
    <interactant intactId="EBI-746595">
        <id>Q96E35</id>
    </interactant>
    <interactant intactId="EBI-2800552">
        <id>Q3YBR2</id>
        <label>TBRG1</label>
    </interactant>
    <organismsDiffer>false</organismsDiffer>
    <experiments>4</experiments>
</comment>
<comment type="interaction">
    <interactant intactId="EBI-746595">
        <id>Q96E35</id>
    </interactant>
    <interactant intactId="EBI-2505861">
        <id>Q13829</id>
        <label>TNFAIP1</label>
    </interactant>
    <organismsDiffer>false</organismsDiffer>
    <experiments>3</experiments>
</comment>
<comment type="interaction">
    <interactant intactId="EBI-746595">
        <id>Q96E35</id>
    </interactant>
    <interactant intactId="EBI-74615">
        <id>Q9H0E2</id>
        <label>TOLLIP</label>
    </interactant>
    <organismsDiffer>false</organismsDiffer>
    <experiments>3</experiments>
</comment>
<comment type="interaction">
    <interactant intactId="EBI-746595">
        <id>Q96E35</id>
    </interactant>
    <interactant intactId="EBI-948613">
        <id>O94842</id>
        <label>TOX4</label>
    </interactant>
    <organismsDiffer>false</organismsDiffer>
    <experiments>6</experiments>
</comment>
<comment type="interaction">
    <interactant intactId="EBI-746595">
        <id>Q96E35</id>
    </interactant>
    <interactant intactId="EBI-719493">
        <id>P14373</id>
        <label>TRIM27</label>
    </interactant>
    <organismsDiffer>false</organismsDiffer>
    <experiments>3</experiments>
</comment>
<comment type="interaction">
    <interactant intactId="EBI-746595">
        <id>Q96E35</id>
    </interactant>
    <interactant intactId="EBI-11993364">
        <id>Q9H8W5-2</id>
        <label>TRIM45</label>
    </interactant>
    <organismsDiffer>false</organismsDiffer>
    <experiments>3</experiments>
</comment>
<comment type="interaction">
    <interactant intactId="EBI-746595">
        <id>Q96E35</id>
    </interactant>
    <interactant intactId="EBI-2515601">
        <id>Q8N680</id>
        <label>ZBTB2</label>
    </interactant>
    <organismsDiffer>false</organismsDiffer>
    <experiments>3</experiments>
</comment>
<comment type="interaction">
    <interactant intactId="EBI-746595">
        <id>Q96E35</id>
    </interactant>
    <interactant intactId="EBI-1054417">
        <id>Q9BRT8</id>
        <label>ZNG1A</label>
    </interactant>
    <organismsDiffer>false</organismsDiffer>
    <experiments>3</experiments>
</comment>
<comment type="interaction">
    <interactant intactId="EBI-746595">
        <id>Q96E35</id>
    </interactant>
    <interactant intactId="EBI-723434">
        <id>Q5JTY5</id>
        <label>ZNG1C</label>
    </interactant>
    <organismsDiffer>false</organismsDiffer>
    <experiments>3</experiments>
</comment>
<comment type="interaction">
    <interactant intactId="EBI-746595">
        <id>Q96E35</id>
    </interactant>
    <interactant intactId="EBI-12928654">
        <id>Q6NVZ8</id>
        <label>ZNG1E</label>
    </interactant>
    <organismsDiffer>false</organismsDiffer>
    <experiments>3</experiments>
</comment>
<comment type="interaction">
    <interactant intactId="EBI-746595">
        <id>Q96E35</id>
    </interactant>
    <interactant intactId="EBI-1538838">
        <id>Q2QGD7</id>
        <label>ZXDC</label>
    </interactant>
    <organismsDiffer>false</organismsDiffer>
    <experiments>3</experiments>
</comment>
<comment type="subcellular location">
    <subcellularLocation>
        <location evidence="2">Cytoplasm</location>
    </subcellularLocation>
    <subcellularLocation>
        <location evidence="2">Cell membrane</location>
        <topology evidence="2">Peripheral membrane protein</topology>
    </subcellularLocation>
</comment>
<comment type="tissue specificity">
    <text evidence="2">Expressed in brain, testis, placenta, heart, liver, skeletal muscle, kidney and stomach.</text>
</comment>
<keyword id="KW-1003">Cell membrane</keyword>
<keyword id="KW-0963">Cytoplasm</keyword>
<keyword id="KW-0472">Membrane</keyword>
<keyword id="KW-0479">Metal-binding</keyword>
<keyword id="KW-1267">Proteomics identification</keyword>
<keyword id="KW-1185">Reference proteome</keyword>
<keyword id="KW-0862">Zinc</keyword>
<keyword id="KW-0863">Zinc-finger</keyword>